<keyword id="KW-0560">Oxidoreductase</keyword>
<keyword id="KW-1185">Reference proteome</keyword>
<comment type="similarity">
    <text evidence="3">Belongs to the short-chain dehydrogenases/reductases (SDR) family.</text>
</comment>
<name>YBBO_ECOLI</name>
<sequence>MTHKATEILTGKVMQKSVLITGCSSGIGLESALELKRQGFHVLAGCRKPDDVERMNSMGFTGVLIDLDSPESVDRAADEVIALTDNCLYGIFNNAGFGMYGPLSTISRAQMEQQFSANFFGAHQLTMRLLPAMLPHGEGRIVMTSSVMGLISTPGRGAYAASKYALEAWSDALRMELRHSGIKVSLIEPGPIRTRFTDNVNQTQSDKPVENPGIAARFTLGPEAVVDKVRHAFISEKPKMRYPVTLVTWAVMVLKRLLPGRVMDKILQG</sequence>
<feature type="chain" id="PRO_0000054822" description="Uncharacterized oxidoreductase YbbO">
    <location>
        <begin position="1"/>
        <end position="269"/>
    </location>
</feature>
<feature type="active site" description="Proton acceptor" evidence="2">
    <location>
        <position position="159"/>
    </location>
</feature>
<feature type="binding site" evidence="1">
    <location>
        <begin position="15"/>
        <end position="41"/>
    </location>
    <ligand>
        <name>NADP(+)</name>
        <dbReference type="ChEBI" id="CHEBI:58349"/>
    </ligand>
</feature>
<feature type="binding site" evidence="1">
    <location>
        <position position="146"/>
    </location>
    <ligand>
        <name>substrate</name>
    </ligand>
</feature>
<protein>
    <recommendedName>
        <fullName>Uncharacterized oxidoreductase YbbO</fullName>
        <ecNumber>1.-.-.-</ecNumber>
    </recommendedName>
</protein>
<accession>P0AFP4</accession>
<accession>P77388</accession>
<accession>Q2MBT4</accession>
<dbReference type="EC" id="1.-.-.-"/>
<dbReference type="EMBL" id="U82664">
    <property type="protein sequence ID" value="AAB40247.1"/>
    <property type="molecule type" value="Genomic_DNA"/>
</dbReference>
<dbReference type="EMBL" id="U00096">
    <property type="protein sequence ID" value="AAC73595.1"/>
    <property type="molecule type" value="Genomic_DNA"/>
</dbReference>
<dbReference type="EMBL" id="AP009048">
    <property type="protein sequence ID" value="BAE76272.1"/>
    <property type="molecule type" value="Genomic_DNA"/>
</dbReference>
<dbReference type="PIR" id="D64780">
    <property type="entry name" value="D64780"/>
</dbReference>
<dbReference type="RefSeq" id="NP_415026.1">
    <property type="nucleotide sequence ID" value="NC_000913.3"/>
</dbReference>
<dbReference type="RefSeq" id="WP_000148959.1">
    <property type="nucleotide sequence ID" value="NZ_STEB01000007.1"/>
</dbReference>
<dbReference type="SMR" id="P0AFP4"/>
<dbReference type="BioGRID" id="4260670">
    <property type="interactions" value="19"/>
</dbReference>
<dbReference type="DIP" id="DIP-48139N"/>
<dbReference type="FunCoup" id="P0AFP4">
    <property type="interactions" value="517"/>
</dbReference>
<dbReference type="IntAct" id="P0AFP4">
    <property type="interactions" value="16"/>
</dbReference>
<dbReference type="STRING" id="511145.b0493"/>
<dbReference type="jPOST" id="P0AFP4"/>
<dbReference type="PaxDb" id="511145-b0493"/>
<dbReference type="EnsemblBacteria" id="AAC73595">
    <property type="protein sequence ID" value="AAC73595"/>
    <property type="gene ID" value="b0493"/>
</dbReference>
<dbReference type="GeneID" id="93776956"/>
<dbReference type="GeneID" id="945337"/>
<dbReference type="KEGG" id="ecj:JW0482"/>
<dbReference type="KEGG" id="eco:b0493"/>
<dbReference type="PATRIC" id="fig|511145.12.peg.514"/>
<dbReference type="EchoBASE" id="EB3050"/>
<dbReference type="eggNOG" id="COG0300">
    <property type="taxonomic scope" value="Bacteria"/>
</dbReference>
<dbReference type="HOGENOM" id="CLU_010194_2_9_6"/>
<dbReference type="InParanoid" id="P0AFP4"/>
<dbReference type="OMA" id="KEDHCDV"/>
<dbReference type="OrthoDB" id="9810734at2"/>
<dbReference type="PhylomeDB" id="P0AFP4"/>
<dbReference type="BioCyc" id="EcoCyc:G6269-MONOMER"/>
<dbReference type="BioCyc" id="MetaCyc:G6269-MONOMER"/>
<dbReference type="PRO" id="PR:P0AFP4"/>
<dbReference type="Proteomes" id="UP000000625">
    <property type="component" value="Chromosome"/>
</dbReference>
<dbReference type="GO" id="GO:0008106">
    <property type="term" value="F:alcohol dehydrogenase (NADP+) activity"/>
    <property type="evidence" value="ECO:0000314"/>
    <property type="project" value="EcoCyc"/>
</dbReference>
<dbReference type="GO" id="GO:0016491">
    <property type="term" value="F:oxidoreductase activity"/>
    <property type="evidence" value="ECO:0000318"/>
    <property type="project" value="GO_Central"/>
</dbReference>
<dbReference type="GO" id="GO:0008202">
    <property type="term" value="P:steroid metabolic process"/>
    <property type="evidence" value="ECO:0000318"/>
    <property type="project" value="GO_Central"/>
</dbReference>
<dbReference type="CDD" id="cd05374">
    <property type="entry name" value="17beta-HSD-like_SDR_c"/>
    <property type="match status" value="1"/>
</dbReference>
<dbReference type="FunFam" id="3.40.50.720:FF:000230">
    <property type="entry name" value="Oxidoreductase, short chain dehydrogenase/reductase family"/>
    <property type="match status" value="1"/>
</dbReference>
<dbReference type="Gene3D" id="3.40.50.720">
    <property type="entry name" value="NAD(P)-binding Rossmann-like Domain"/>
    <property type="match status" value="1"/>
</dbReference>
<dbReference type="InterPro" id="IPR036291">
    <property type="entry name" value="NAD(P)-bd_dom_sf"/>
</dbReference>
<dbReference type="InterPro" id="IPR020904">
    <property type="entry name" value="Sc_DH/Rdtase_CS"/>
</dbReference>
<dbReference type="InterPro" id="IPR002347">
    <property type="entry name" value="SDR_fam"/>
</dbReference>
<dbReference type="NCBIfam" id="NF005950">
    <property type="entry name" value="PRK08017.1"/>
    <property type="match status" value="1"/>
</dbReference>
<dbReference type="PANTHER" id="PTHR43313:SF1">
    <property type="entry name" value="3BETA-HYDROXYSTEROID DEHYDROGENASE DHS-16"/>
    <property type="match status" value="1"/>
</dbReference>
<dbReference type="PANTHER" id="PTHR43313">
    <property type="entry name" value="SHORT-CHAIN DEHYDROGENASE/REDUCTASE FAMILY 9C"/>
    <property type="match status" value="1"/>
</dbReference>
<dbReference type="Pfam" id="PF00106">
    <property type="entry name" value="adh_short"/>
    <property type="match status" value="1"/>
</dbReference>
<dbReference type="PRINTS" id="PR00081">
    <property type="entry name" value="GDHRDH"/>
</dbReference>
<dbReference type="SMART" id="SM00822">
    <property type="entry name" value="PKS_KR"/>
    <property type="match status" value="1"/>
</dbReference>
<dbReference type="SUPFAM" id="SSF51735">
    <property type="entry name" value="NAD(P)-binding Rossmann-fold domains"/>
    <property type="match status" value="1"/>
</dbReference>
<dbReference type="PROSITE" id="PS00061">
    <property type="entry name" value="ADH_SHORT"/>
    <property type="match status" value="1"/>
</dbReference>
<gene>
    <name type="primary">ybbO</name>
    <name type="ordered locus">b0493</name>
    <name type="ordered locus">JW0482</name>
</gene>
<reference key="1">
    <citation type="submission" date="1997-01" db="EMBL/GenBank/DDBJ databases">
        <title>Sequence of minutes 4-25 of Escherichia coli.</title>
        <authorList>
            <person name="Chung E."/>
            <person name="Allen E."/>
            <person name="Araujo R."/>
            <person name="Aparicio A.M."/>
            <person name="Davis K."/>
            <person name="Duncan M."/>
            <person name="Federspiel N."/>
            <person name="Hyman R."/>
            <person name="Kalman S."/>
            <person name="Komp C."/>
            <person name="Kurdi O."/>
            <person name="Lew H."/>
            <person name="Lin D."/>
            <person name="Namath A."/>
            <person name="Oefner P."/>
            <person name="Roberts D."/>
            <person name="Schramm S."/>
            <person name="Davis R.W."/>
        </authorList>
    </citation>
    <scope>NUCLEOTIDE SEQUENCE [LARGE SCALE GENOMIC DNA]</scope>
    <source>
        <strain>K12 / MG1655 / ATCC 47076</strain>
    </source>
</reference>
<reference key="2">
    <citation type="journal article" date="1997" name="Science">
        <title>The complete genome sequence of Escherichia coli K-12.</title>
        <authorList>
            <person name="Blattner F.R."/>
            <person name="Plunkett G. III"/>
            <person name="Bloch C.A."/>
            <person name="Perna N.T."/>
            <person name="Burland V."/>
            <person name="Riley M."/>
            <person name="Collado-Vides J."/>
            <person name="Glasner J.D."/>
            <person name="Rode C.K."/>
            <person name="Mayhew G.F."/>
            <person name="Gregor J."/>
            <person name="Davis N.W."/>
            <person name="Kirkpatrick H.A."/>
            <person name="Goeden M.A."/>
            <person name="Rose D.J."/>
            <person name="Mau B."/>
            <person name="Shao Y."/>
        </authorList>
    </citation>
    <scope>NUCLEOTIDE SEQUENCE [LARGE SCALE GENOMIC DNA]</scope>
    <source>
        <strain>K12 / MG1655 / ATCC 47076</strain>
    </source>
</reference>
<reference key="3">
    <citation type="journal article" date="2006" name="Mol. Syst. Biol.">
        <title>Highly accurate genome sequences of Escherichia coli K-12 strains MG1655 and W3110.</title>
        <authorList>
            <person name="Hayashi K."/>
            <person name="Morooka N."/>
            <person name="Yamamoto Y."/>
            <person name="Fujita K."/>
            <person name="Isono K."/>
            <person name="Choi S."/>
            <person name="Ohtsubo E."/>
            <person name="Baba T."/>
            <person name="Wanner B.L."/>
            <person name="Mori H."/>
            <person name="Horiuchi T."/>
        </authorList>
    </citation>
    <scope>NUCLEOTIDE SEQUENCE [LARGE SCALE GENOMIC DNA]</scope>
    <source>
        <strain>K12 / W3110 / ATCC 27325 / DSM 5911</strain>
    </source>
</reference>
<proteinExistence type="inferred from homology"/>
<evidence type="ECO:0000250" key="1"/>
<evidence type="ECO:0000255" key="2">
    <source>
        <dbReference type="PROSITE-ProRule" id="PRU10001"/>
    </source>
</evidence>
<evidence type="ECO:0000305" key="3"/>
<organism>
    <name type="scientific">Escherichia coli (strain K12)</name>
    <dbReference type="NCBI Taxonomy" id="83333"/>
    <lineage>
        <taxon>Bacteria</taxon>
        <taxon>Pseudomonadati</taxon>
        <taxon>Pseudomonadota</taxon>
        <taxon>Gammaproteobacteria</taxon>
        <taxon>Enterobacterales</taxon>
        <taxon>Enterobacteriaceae</taxon>
        <taxon>Escherichia</taxon>
    </lineage>
</organism>